<keyword id="KW-0131">Cell cycle</keyword>
<keyword id="KW-0132">Cell division</keyword>
<keyword id="KW-0997">Cell inner membrane</keyword>
<keyword id="KW-1003">Cell membrane</keyword>
<keyword id="KW-0133">Cell shape</keyword>
<keyword id="KW-0961">Cell wall biogenesis/degradation</keyword>
<keyword id="KW-0460">Magnesium</keyword>
<keyword id="KW-0472">Membrane</keyword>
<keyword id="KW-0479">Metal-binding</keyword>
<keyword id="KW-0573">Peptidoglycan synthesis</keyword>
<keyword id="KW-0808">Transferase</keyword>
<keyword id="KW-0812">Transmembrane</keyword>
<keyword id="KW-1133">Transmembrane helix</keyword>
<protein>
    <recommendedName>
        <fullName evidence="1">Phospho-N-acetylmuramoyl-pentapeptide-transferase</fullName>
        <ecNumber evidence="1">2.7.8.13</ecNumber>
    </recommendedName>
    <alternativeName>
        <fullName evidence="1">UDP-MurNAc-pentapeptide phosphotransferase</fullName>
    </alternativeName>
</protein>
<sequence>MLYYLHYYSGYLGILNVFKYITFRAMGAAITSLVLCWLLGRPMISLLRKLKAGQPIRGKEVVKDLAALHGSKSGTPTMGGLLILLAVSLSCLIWVIPTNKFFWLSLLSMLFMGGIGFWDDFKKVIQKKHYGISGKIKLLAQAIVGVVVGIVLLADPETSRLAQKLTIPFLKEVKHIDIGWMAIPFFILVVMGSSNAVNLTDGLDGLAAGCTIGVAFVYAVFSYISGRADMSGYLFLPYIKGAGELTIFCSALIGACMGFLWYNCYPAAVFMGDTGSLAIGSALGVVAIILGQELLLVIAGGIFVIEATSVILQVASFKLTGKRLFAMAPLHHHFELKGWSETAVTVRFWILSLLFGLLALSSLKIR</sequence>
<feature type="chain" id="PRO_1000090642" description="Phospho-N-acetylmuramoyl-pentapeptide-transferase">
    <location>
        <begin position="1"/>
        <end position="366"/>
    </location>
</feature>
<feature type="transmembrane region" description="Helical" evidence="1">
    <location>
        <begin position="27"/>
        <end position="47"/>
    </location>
</feature>
<feature type="transmembrane region" description="Helical" evidence="1">
    <location>
        <begin position="76"/>
        <end position="96"/>
    </location>
</feature>
<feature type="transmembrane region" description="Helical" evidence="1">
    <location>
        <begin position="101"/>
        <end position="121"/>
    </location>
</feature>
<feature type="transmembrane region" description="Helical" evidence="1">
    <location>
        <begin position="136"/>
        <end position="156"/>
    </location>
</feature>
<feature type="transmembrane region" description="Helical" evidence="1">
    <location>
        <begin position="176"/>
        <end position="196"/>
    </location>
</feature>
<feature type="transmembrane region" description="Helical" evidence="1">
    <location>
        <begin position="205"/>
        <end position="225"/>
    </location>
</feature>
<feature type="transmembrane region" description="Helical" evidence="1">
    <location>
        <begin position="241"/>
        <end position="261"/>
    </location>
</feature>
<feature type="transmembrane region" description="Helical" evidence="1">
    <location>
        <begin position="264"/>
        <end position="284"/>
    </location>
</feature>
<feature type="transmembrane region" description="Helical" evidence="1">
    <location>
        <begin position="285"/>
        <end position="305"/>
    </location>
</feature>
<feature type="transmembrane region" description="Helical" evidence="1">
    <location>
        <begin position="343"/>
        <end position="363"/>
    </location>
</feature>
<gene>
    <name evidence="1" type="primary">mraY</name>
    <name type="ordered locus">Minf_1413</name>
</gene>
<reference key="1">
    <citation type="journal article" date="2008" name="Biol. Direct">
        <title>Complete genome sequence of the extremely acidophilic methanotroph isolate V4, Methylacidiphilum infernorum, a representative of the bacterial phylum Verrucomicrobia.</title>
        <authorList>
            <person name="Hou S."/>
            <person name="Makarova K.S."/>
            <person name="Saw J.H."/>
            <person name="Senin P."/>
            <person name="Ly B.V."/>
            <person name="Zhou Z."/>
            <person name="Ren Y."/>
            <person name="Wang J."/>
            <person name="Galperin M.Y."/>
            <person name="Omelchenko M.V."/>
            <person name="Wolf Y.I."/>
            <person name="Yutin N."/>
            <person name="Koonin E.V."/>
            <person name="Stott M.B."/>
            <person name="Mountain B.W."/>
            <person name="Crowe M.A."/>
            <person name="Smirnova A.V."/>
            <person name="Dunfield P.F."/>
            <person name="Feng L."/>
            <person name="Wang L."/>
            <person name="Alam M."/>
        </authorList>
    </citation>
    <scope>NUCLEOTIDE SEQUENCE [LARGE SCALE GENOMIC DNA]</scope>
    <source>
        <strain>Isolate V4</strain>
    </source>
</reference>
<dbReference type="EC" id="2.7.8.13" evidence="1"/>
<dbReference type="EMBL" id="CP000975">
    <property type="protein sequence ID" value="ACD83467.1"/>
    <property type="molecule type" value="Genomic_DNA"/>
</dbReference>
<dbReference type="RefSeq" id="WP_012463749.1">
    <property type="nucleotide sequence ID" value="NC_010794.1"/>
</dbReference>
<dbReference type="SMR" id="B3DVW4"/>
<dbReference type="STRING" id="481448.Minf_1413"/>
<dbReference type="KEGG" id="min:Minf_1413"/>
<dbReference type="eggNOG" id="COG0472">
    <property type="taxonomic scope" value="Bacteria"/>
</dbReference>
<dbReference type="HOGENOM" id="CLU_023982_0_0_0"/>
<dbReference type="OrthoDB" id="9805475at2"/>
<dbReference type="UniPathway" id="UPA00219"/>
<dbReference type="Proteomes" id="UP000009149">
    <property type="component" value="Chromosome"/>
</dbReference>
<dbReference type="GO" id="GO:0005886">
    <property type="term" value="C:plasma membrane"/>
    <property type="evidence" value="ECO:0007669"/>
    <property type="project" value="UniProtKB-SubCell"/>
</dbReference>
<dbReference type="GO" id="GO:0046872">
    <property type="term" value="F:metal ion binding"/>
    <property type="evidence" value="ECO:0007669"/>
    <property type="project" value="UniProtKB-KW"/>
</dbReference>
<dbReference type="GO" id="GO:0008963">
    <property type="term" value="F:phospho-N-acetylmuramoyl-pentapeptide-transferase activity"/>
    <property type="evidence" value="ECO:0007669"/>
    <property type="project" value="UniProtKB-UniRule"/>
</dbReference>
<dbReference type="GO" id="GO:0051992">
    <property type="term" value="F:UDP-N-acetylmuramoyl-L-alanyl-D-glutamyl-meso-2,6-diaminopimelyl-D-alanyl-D-alanine:undecaprenyl-phosphate transferase activity"/>
    <property type="evidence" value="ECO:0007669"/>
    <property type="project" value="RHEA"/>
</dbReference>
<dbReference type="GO" id="GO:0051301">
    <property type="term" value="P:cell division"/>
    <property type="evidence" value="ECO:0007669"/>
    <property type="project" value="UniProtKB-KW"/>
</dbReference>
<dbReference type="GO" id="GO:0071555">
    <property type="term" value="P:cell wall organization"/>
    <property type="evidence" value="ECO:0007669"/>
    <property type="project" value="UniProtKB-KW"/>
</dbReference>
<dbReference type="GO" id="GO:0009252">
    <property type="term" value="P:peptidoglycan biosynthetic process"/>
    <property type="evidence" value="ECO:0007669"/>
    <property type="project" value="UniProtKB-UniRule"/>
</dbReference>
<dbReference type="GO" id="GO:0008360">
    <property type="term" value="P:regulation of cell shape"/>
    <property type="evidence" value="ECO:0007669"/>
    <property type="project" value="UniProtKB-KW"/>
</dbReference>
<dbReference type="CDD" id="cd06852">
    <property type="entry name" value="GT_MraY"/>
    <property type="match status" value="1"/>
</dbReference>
<dbReference type="HAMAP" id="MF_00038">
    <property type="entry name" value="MraY"/>
    <property type="match status" value="1"/>
</dbReference>
<dbReference type="InterPro" id="IPR000715">
    <property type="entry name" value="Glycosyl_transferase_4"/>
</dbReference>
<dbReference type="InterPro" id="IPR003524">
    <property type="entry name" value="PNAcMuramoyl-5peptid_Trfase"/>
</dbReference>
<dbReference type="InterPro" id="IPR018480">
    <property type="entry name" value="PNAcMuramoyl-5peptid_Trfase_CS"/>
</dbReference>
<dbReference type="NCBIfam" id="TIGR00445">
    <property type="entry name" value="mraY"/>
    <property type="match status" value="1"/>
</dbReference>
<dbReference type="PANTHER" id="PTHR22926">
    <property type="entry name" value="PHOSPHO-N-ACETYLMURAMOYL-PENTAPEPTIDE-TRANSFERASE"/>
    <property type="match status" value="1"/>
</dbReference>
<dbReference type="PANTHER" id="PTHR22926:SF5">
    <property type="entry name" value="PHOSPHO-N-ACETYLMURAMOYL-PENTAPEPTIDE-TRANSFERASE HOMOLOG"/>
    <property type="match status" value="1"/>
</dbReference>
<dbReference type="Pfam" id="PF00953">
    <property type="entry name" value="Glycos_transf_4"/>
    <property type="match status" value="1"/>
</dbReference>
<dbReference type="Pfam" id="PF10555">
    <property type="entry name" value="MraY_sig1"/>
    <property type="match status" value="1"/>
</dbReference>
<dbReference type="PROSITE" id="PS01347">
    <property type="entry name" value="MRAY_1"/>
    <property type="match status" value="1"/>
</dbReference>
<dbReference type="PROSITE" id="PS01348">
    <property type="entry name" value="MRAY_2"/>
    <property type="match status" value="1"/>
</dbReference>
<evidence type="ECO:0000255" key="1">
    <source>
        <dbReference type="HAMAP-Rule" id="MF_00038"/>
    </source>
</evidence>
<organism>
    <name type="scientific">Methylacidiphilum infernorum (isolate V4)</name>
    <name type="common">Methylokorus infernorum (strain V4)</name>
    <dbReference type="NCBI Taxonomy" id="481448"/>
    <lineage>
        <taxon>Bacteria</taxon>
        <taxon>Pseudomonadati</taxon>
        <taxon>Verrucomicrobiota</taxon>
        <taxon>Methylacidiphilae</taxon>
        <taxon>Methylacidiphilales</taxon>
        <taxon>Methylacidiphilaceae</taxon>
        <taxon>Methylacidiphilum (ex Ratnadevi et al. 2023)</taxon>
    </lineage>
</organism>
<name>MRAY_METI4</name>
<proteinExistence type="inferred from homology"/>
<accession>B3DVW4</accession>
<comment type="function">
    <text evidence="1">Catalyzes the initial step of the lipid cycle reactions in the biosynthesis of the cell wall peptidoglycan: transfers peptidoglycan precursor phospho-MurNAc-pentapeptide from UDP-MurNAc-pentapeptide onto the lipid carrier undecaprenyl phosphate, yielding undecaprenyl-pyrophosphoryl-MurNAc-pentapeptide, known as lipid I.</text>
</comment>
<comment type="catalytic activity">
    <reaction evidence="1">
        <text>UDP-N-acetyl-alpha-D-muramoyl-L-alanyl-gamma-D-glutamyl-meso-2,6-diaminopimeloyl-D-alanyl-D-alanine + di-trans,octa-cis-undecaprenyl phosphate = di-trans,octa-cis-undecaprenyl diphospho-N-acetyl-alpha-D-muramoyl-L-alanyl-D-glutamyl-meso-2,6-diaminopimeloyl-D-alanyl-D-alanine + UMP</text>
        <dbReference type="Rhea" id="RHEA:28386"/>
        <dbReference type="ChEBI" id="CHEBI:57865"/>
        <dbReference type="ChEBI" id="CHEBI:60392"/>
        <dbReference type="ChEBI" id="CHEBI:61386"/>
        <dbReference type="ChEBI" id="CHEBI:61387"/>
        <dbReference type="EC" id="2.7.8.13"/>
    </reaction>
</comment>
<comment type="cofactor">
    <cofactor evidence="1">
        <name>Mg(2+)</name>
        <dbReference type="ChEBI" id="CHEBI:18420"/>
    </cofactor>
</comment>
<comment type="pathway">
    <text evidence="1">Cell wall biogenesis; peptidoglycan biosynthesis.</text>
</comment>
<comment type="subcellular location">
    <subcellularLocation>
        <location evidence="1">Cell inner membrane</location>
        <topology evidence="1">Multi-pass membrane protein</topology>
    </subcellularLocation>
</comment>
<comment type="similarity">
    <text evidence="1">Belongs to the glycosyltransferase 4 family. MraY subfamily.</text>
</comment>